<comment type="function">
    <text evidence="1">Plays a role in promoting the proliferation of synovial fibroblasts in response to pro-inflammatory stimuli.</text>
</comment>
<comment type="subcellular location">
    <subcellularLocation>
        <location evidence="1">Nucleus</location>
    </subcellularLocation>
</comment>
<comment type="alternative products">
    <event type="alternative splicing"/>
    <isoform>
        <id>Q9D2C2-1</id>
        <name>1</name>
        <sequence type="displayed"/>
    </isoform>
    <isoform>
        <id>Q9D2C2-2</id>
        <name>2</name>
        <sequence type="described" ref="VSP_023483"/>
    </isoform>
</comment>
<comment type="tissue specificity">
    <text evidence="3">Expressed in the synovial tissue of knee joints.</text>
</comment>
<comment type="similarity">
    <text evidence="7">Belongs to the SAAL1 family.</text>
</comment>
<dbReference type="EMBL" id="AK019878">
    <property type="protein sequence ID" value="BAB31898.1"/>
    <property type="molecule type" value="mRNA"/>
</dbReference>
<dbReference type="EMBL" id="AK030833">
    <property type="protein sequence ID" value="BAC27152.1"/>
    <property type="molecule type" value="mRNA"/>
</dbReference>
<dbReference type="EMBL" id="AK033202">
    <property type="protein sequence ID" value="BAC28195.1"/>
    <property type="molecule type" value="mRNA"/>
</dbReference>
<dbReference type="EMBL" id="AK132193">
    <property type="protein sequence ID" value="BAE21024.1"/>
    <property type="molecule type" value="mRNA"/>
</dbReference>
<dbReference type="EMBL" id="AK134418">
    <property type="protein sequence ID" value="BAE22136.1"/>
    <property type="molecule type" value="mRNA"/>
</dbReference>
<dbReference type="EMBL" id="BC028473">
    <property type="protein sequence ID" value="AAH28473.1"/>
    <property type="molecule type" value="mRNA"/>
</dbReference>
<dbReference type="EMBL" id="BC087944">
    <property type="protein sequence ID" value="AAH87944.1"/>
    <property type="molecule type" value="mRNA"/>
</dbReference>
<dbReference type="CCDS" id="CCDS52253.1">
    <molecule id="Q9D2C2-1"/>
</dbReference>
<dbReference type="RefSeq" id="NP_001406029.1">
    <molecule id="Q9D2C2-2"/>
    <property type="nucleotide sequence ID" value="NM_001419100.1"/>
</dbReference>
<dbReference type="RefSeq" id="NP_084509.1">
    <molecule id="Q9D2C2-1"/>
    <property type="nucleotide sequence ID" value="NM_030233.2"/>
</dbReference>
<dbReference type="SMR" id="Q9D2C2"/>
<dbReference type="BioGRID" id="219720">
    <property type="interactions" value="1"/>
</dbReference>
<dbReference type="FunCoup" id="Q9D2C2">
    <property type="interactions" value="3803"/>
</dbReference>
<dbReference type="STRING" id="10090.ENSMUSP00000120658"/>
<dbReference type="GlyGen" id="Q9D2C2">
    <property type="glycosylation" value="1 site"/>
</dbReference>
<dbReference type="iPTMnet" id="Q9D2C2"/>
<dbReference type="PhosphoSitePlus" id="Q9D2C2"/>
<dbReference type="SwissPalm" id="Q9D2C2"/>
<dbReference type="jPOST" id="Q9D2C2"/>
<dbReference type="PaxDb" id="10090-ENSMUSP00000120658"/>
<dbReference type="PeptideAtlas" id="Q9D2C2"/>
<dbReference type="ProteomicsDB" id="260810">
    <molecule id="Q9D2C2-1"/>
</dbReference>
<dbReference type="ProteomicsDB" id="260811">
    <molecule id="Q9D2C2-2"/>
</dbReference>
<dbReference type="Pumba" id="Q9D2C2"/>
<dbReference type="Antibodypedia" id="42486">
    <property type="antibodies" value="117 antibodies from 23 providers"/>
</dbReference>
<dbReference type="Ensembl" id="ENSMUST00000143082.4">
    <molecule id="Q9D2C2-1"/>
    <property type="protein sequence ID" value="ENSMUSP00000120658.2"/>
    <property type="gene ID" value="ENSMUSG00000006763.15"/>
</dbReference>
<dbReference type="GeneID" id="78935"/>
<dbReference type="KEGG" id="mmu:78935"/>
<dbReference type="UCSC" id="uc009gyu.2">
    <molecule id="Q9D2C2-1"/>
    <property type="organism name" value="mouse"/>
</dbReference>
<dbReference type="UCSC" id="uc009gyv.2">
    <molecule id="Q9D2C2-2"/>
    <property type="organism name" value="mouse"/>
</dbReference>
<dbReference type="AGR" id="MGI:1926185"/>
<dbReference type="CTD" id="113174"/>
<dbReference type="MGI" id="MGI:1926185">
    <property type="gene designation" value="Saal1"/>
</dbReference>
<dbReference type="VEuPathDB" id="HostDB:ENSMUSG00000006763"/>
<dbReference type="eggNOG" id="ENOG502QS5W">
    <property type="taxonomic scope" value="Eukaryota"/>
</dbReference>
<dbReference type="GeneTree" id="ENSGT00390000004737"/>
<dbReference type="HOGENOM" id="CLU_045694_0_0_1"/>
<dbReference type="InParanoid" id="Q9D2C2"/>
<dbReference type="OMA" id="NMFQELT"/>
<dbReference type="OrthoDB" id="2156856at2759"/>
<dbReference type="PhylomeDB" id="Q9D2C2"/>
<dbReference type="TreeFam" id="TF323873"/>
<dbReference type="BioGRID-ORCS" id="78935">
    <property type="hits" value="2 hits in 76 CRISPR screens"/>
</dbReference>
<dbReference type="ChiTaRS" id="Saal1">
    <property type="organism name" value="mouse"/>
</dbReference>
<dbReference type="PRO" id="PR:Q9D2C2"/>
<dbReference type="Proteomes" id="UP000000589">
    <property type="component" value="Chromosome 7"/>
</dbReference>
<dbReference type="RNAct" id="Q9D2C2">
    <property type="molecule type" value="protein"/>
</dbReference>
<dbReference type="Bgee" id="ENSMUSG00000006763">
    <property type="expression patterns" value="Expressed in ileal epithelium and 187 other cell types or tissues"/>
</dbReference>
<dbReference type="ExpressionAtlas" id="Q9D2C2">
    <property type="expression patterns" value="baseline and differential"/>
</dbReference>
<dbReference type="GO" id="GO:0005654">
    <property type="term" value="C:nucleoplasm"/>
    <property type="evidence" value="ECO:0007669"/>
    <property type="project" value="Ensembl"/>
</dbReference>
<dbReference type="GO" id="GO:1901647">
    <property type="term" value="P:positive regulation of synoviocyte proliferation"/>
    <property type="evidence" value="ECO:0007669"/>
    <property type="project" value="Ensembl"/>
</dbReference>
<dbReference type="FunFam" id="1.25.10.10:FF:000298">
    <property type="entry name" value="Serum amyloid A like 1"/>
    <property type="match status" value="1"/>
</dbReference>
<dbReference type="Gene3D" id="1.25.10.10">
    <property type="entry name" value="Leucine-rich Repeat Variant"/>
    <property type="match status" value="1"/>
</dbReference>
<dbReference type="InterPro" id="IPR011989">
    <property type="entry name" value="ARM-like"/>
</dbReference>
<dbReference type="InterPro" id="IPR016024">
    <property type="entry name" value="ARM-type_fold"/>
</dbReference>
<dbReference type="InterPro" id="IPR052464">
    <property type="entry name" value="Synovial_Prolif_Regulator"/>
</dbReference>
<dbReference type="PANTHER" id="PTHR23424:SF23">
    <property type="entry name" value="PROTEIN SAAL1"/>
    <property type="match status" value="1"/>
</dbReference>
<dbReference type="PANTHER" id="PTHR23424">
    <property type="entry name" value="SERUM AMYLOID A"/>
    <property type="match status" value="1"/>
</dbReference>
<dbReference type="SUPFAM" id="SSF48371">
    <property type="entry name" value="ARM repeat"/>
    <property type="match status" value="2"/>
</dbReference>
<reference key="1">
    <citation type="journal article" date="2005" name="Science">
        <title>The transcriptional landscape of the mammalian genome.</title>
        <authorList>
            <person name="Carninci P."/>
            <person name="Kasukawa T."/>
            <person name="Katayama S."/>
            <person name="Gough J."/>
            <person name="Frith M.C."/>
            <person name="Maeda N."/>
            <person name="Oyama R."/>
            <person name="Ravasi T."/>
            <person name="Lenhard B."/>
            <person name="Wells C."/>
            <person name="Kodzius R."/>
            <person name="Shimokawa K."/>
            <person name="Bajic V.B."/>
            <person name="Brenner S.E."/>
            <person name="Batalov S."/>
            <person name="Forrest A.R."/>
            <person name="Zavolan M."/>
            <person name="Davis M.J."/>
            <person name="Wilming L.G."/>
            <person name="Aidinis V."/>
            <person name="Allen J.E."/>
            <person name="Ambesi-Impiombato A."/>
            <person name="Apweiler R."/>
            <person name="Aturaliya R.N."/>
            <person name="Bailey T.L."/>
            <person name="Bansal M."/>
            <person name="Baxter L."/>
            <person name="Beisel K.W."/>
            <person name="Bersano T."/>
            <person name="Bono H."/>
            <person name="Chalk A.M."/>
            <person name="Chiu K.P."/>
            <person name="Choudhary V."/>
            <person name="Christoffels A."/>
            <person name="Clutterbuck D.R."/>
            <person name="Crowe M.L."/>
            <person name="Dalla E."/>
            <person name="Dalrymple B.P."/>
            <person name="de Bono B."/>
            <person name="Della Gatta G."/>
            <person name="di Bernardo D."/>
            <person name="Down T."/>
            <person name="Engstrom P."/>
            <person name="Fagiolini M."/>
            <person name="Faulkner G."/>
            <person name="Fletcher C.F."/>
            <person name="Fukushima T."/>
            <person name="Furuno M."/>
            <person name="Futaki S."/>
            <person name="Gariboldi M."/>
            <person name="Georgii-Hemming P."/>
            <person name="Gingeras T.R."/>
            <person name="Gojobori T."/>
            <person name="Green R.E."/>
            <person name="Gustincich S."/>
            <person name="Harbers M."/>
            <person name="Hayashi Y."/>
            <person name="Hensch T.K."/>
            <person name="Hirokawa N."/>
            <person name="Hill D."/>
            <person name="Huminiecki L."/>
            <person name="Iacono M."/>
            <person name="Ikeo K."/>
            <person name="Iwama A."/>
            <person name="Ishikawa T."/>
            <person name="Jakt M."/>
            <person name="Kanapin A."/>
            <person name="Katoh M."/>
            <person name="Kawasawa Y."/>
            <person name="Kelso J."/>
            <person name="Kitamura H."/>
            <person name="Kitano H."/>
            <person name="Kollias G."/>
            <person name="Krishnan S.P."/>
            <person name="Kruger A."/>
            <person name="Kummerfeld S.K."/>
            <person name="Kurochkin I.V."/>
            <person name="Lareau L.F."/>
            <person name="Lazarevic D."/>
            <person name="Lipovich L."/>
            <person name="Liu J."/>
            <person name="Liuni S."/>
            <person name="McWilliam S."/>
            <person name="Madan Babu M."/>
            <person name="Madera M."/>
            <person name="Marchionni L."/>
            <person name="Matsuda H."/>
            <person name="Matsuzawa S."/>
            <person name="Miki H."/>
            <person name="Mignone F."/>
            <person name="Miyake S."/>
            <person name="Morris K."/>
            <person name="Mottagui-Tabar S."/>
            <person name="Mulder N."/>
            <person name="Nakano N."/>
            <person name="Nakauchi H."/>
            <person name="Ng P."/>
            <person name="Nilsson R."/>
            <person name="Nishiguchi S."/>
            <person name="Nishikawa S."/>
            <person name="Nori F."/>
            <person name="Ohara O."/>
            <person name="Okazaki Y."/>
            <person name="Orlando V."/>
            <person name="Pang K.C."/>
            <person name="Pavan W.J."/>
            <person name="Pavesi G."/>
            <person name="Pesole G."/>
            <person name="Petrovsky N."/>
            <person name="Piazza S."/>
            <person name="Reed J."/>
            <person name="Reid J.F."/>
            <person name="Ring B.Z."/>
            <person name="Ringwald M."/>
            <person name="Rost B."/>
            <person name="Ruan Y."/>
            <person name="Salzberg S.L."/>
            <person name="Sandelin A."/>
            <person name="Schneider C."/>
            <person name="Schoenbach C."/>
            <person name="Sekiguchi K."/>
            <person name="Semple C.A."/>
            <person name="Seno S."/>
            <person name="Sessa L."/>
            <person name="Sheng Y."/>
            <person name="Shibata Y."/>
            <person name="Shimada H."/>
            <person name="Shimada K."/>
            <person name="Silva D."/>
            <person name="Sinclair B."/>
            <person name="Sperling S."/>
            <person name="Stupka E."/>
            <person name="Sugiura K."/>
            <person name="Sultana R."/>
            <person name="Takenaka Y."/>
            <person name="Taki K."/>
            <person name="Tammoja K."/>
            <person name="Tan S.L."/>
            <person name="Tang S."/>
            <person name="Taylor M.S."/>
            <person name="Tegner J."/>
            <person name="Teichmann S.A."/>
            <person name="Ueda H.R."/>
            <person name="van Nimwegen E."/>
            <person name="Verardo R."/>
            <person name="Wei C.L."/>
            <person name="Yagi K."/>
            <person name="Yamanishi H."/>
            <person name="Zabarovsky E."/>
            <person name="Zhu S."/>
            <person name="Zimmer A."/>
            <person name="Hide W."/>
            <person name="Bult C."/>
            <person name="Grimmond S.M."/>
            <person name="Teasdale R.D."/>
            <person name="Liu E.T."/>
            <person name="Brusic V."/>
            <person name="Quackenbush J."/>
            <person name="Wahlestedt C."/>
            <person name="Mattick J.S."/>
            <person name="Hume D.A."/>
            <person name="Kai C."/>
            <person name="Sasaki D."/>
            <person name="Tomaru Y."/>
            <person name="Fukuda S."/>
            <person name="Kanamori-Katayama M."/>
            <person name="Suzuki M."/>
            <person name="Aoki J."/>
            <person name="Arakawa T."/>
            <person name="Iida J."/>
            <person name="Imamura K."/>
            <person name="Itoh M."/>
            <person name="Kato T."/>
            <person name="Kawaji H."/>
            <person name="Kawagashira N."/>
            <person name="Kawashima T."/>
            <person name="Kojima M."/>
            <person name="Kondo S."/>
            <person name="Konno H."/>
            <person name="Nakano K."/>
            <person name="Ninomiya N."/>
            <person name="Nishio T."/>
            <person name="Okada M."/>
            <person name="Plessy C."/>
            <person name="Shibata K."/>
            <person name="Shiraki T."/>
            <person name="Suzuki S."/>
            <person name="Tagami M."/>
            <person name="Waki K."/>
            <person name="Watahiki A."/>
            <person name="Okamura-Oho Y."/>
            <person name="Suzuki H."/>
            <person name="Kawai J."/>
            <person name="Hayashizaki Y."/>
        </authorList>
    </citation>
    <scope>NUCLEOTIDE SEQUENCE [LARGE SCALE MRNA] (ISOFORMS 1 AND 2)</scope>
    <source>
        <strain>C57BL/6J</strain>
        <tissue>Ovary</tissue>
        <tissue>Testis</tissue>
        <tissue>Thymus</tissue>
        <tissue>Uterus</tissue>
    </source>
</reference>
<reference key="2">
    <citation type="journal article" date="2004" name="Genome Res.">
        <title>The status, quality, and expansion of the NIH full-length cDNA project: the Mammalian Gene Collection (MGC).</title>
        <authorList>
            <consortium name="The MGC Project Team"/>
        </authorList>
    </citation>
    <scope>NUCLEOTIDE SEQUENCE [LARGE SCALE MRNA] (ISOFORM 1)</scope>
    <scope>NUCLEOTIDE SEQUENCE [LARGE SCALE MRNA] OF 190-474 (ISOFORM 2)</scope>
    <source>
        <strain>C57BL/6J</strain>
        <tissue>Kidney</tissue>
        <tissue>Mammary gland</tissue>
    </source>
</reference>
<reference key="3">
    <citation type="journal article" date="2004" name="Mol. Cell. Proteomics">
        <title>Phosphoproteomic analysis of the developing mouse brain.</title>
        <authorList>
            <person name="Ballif B.A."/>
            <person name="Villen J."/>
            <person name="Beausoleil S.A."/>
            <person name="Schwartz D."/>
            <person name="Gygi S.P."/>
        </authorList>
    </citation>
    <scope>PHOSPHORYLATION [LARGE SCALE ANALYSIS] AT SER-6 AND SER-14</scope>
    <scope>IDENTIFICATION BY MASS SPECTROMETRY [LARGE SCALE ANALYSIS]</scope>
    <source>
        <tissue>Embryonic brain</tissue>
    </source>
</reference>
<reference key="4">
    <citation type="journal article" date="2007" name="Science">
        <title>ATM and ATR substrate analysis reveals extensive protein networks responsive to DNA damage.</title>
        <authorList>
            <person name="Matsuoka S."/>
            <person name="Ballif B.A."/>
            <person name="Smogorzewska A."/>
            <person name="McDonald E.R. III"/>
            <person name="Hurov K.E."/>
            <person name="Luo J."/>
            <person name="Bakalarski C.E."/>
            <person name="Zhao Z."/>
            <person name="Solimini N."/>
            <person name="Lerenthal Y."/>
            <person name="Shiloh Y."/>
            <person name="Gygi S.P."/>
            <person name="Elledge S.J."/>
        </authorList>
    </citation>
    <scope>PHOSPHORYLATION [LARGE SCALE ANALYSIS] AT THR-387</scope>
    <scope>IDENTIFICATION BY MASS SPECTROMETRY [LARGE SCALE ANALYSIS]</scope>
    <source>
        <tissue>Embryonic fibroblast</tissue>
    </source>
</reference>
<reference key="5">
    <citation type="journal article" date="2010" name="Cell">
        <title>A tissue-specific atlas of mouse protein phosphorylation and expression.</title>
        <authorList>
            <person name="Huttlin E.L."/>
            <person name="Jedrychowski M.P."/>
            <person name="Elias J.E."/>
            <person name="Goswami T."/>
            <person name="Rad R."/>
            <person name="Beausoleil S.A."/>
            <person name="Villen J."/>
            <person name="Haas W."/>
            <person name="Sowa M.E."/>
            <person name="Gygi S.P."/>
        </authorList>
    </citation>
    <scope>PHOSPHORYLATION [LARGE SCALE ANALYSIS] AT SER-6 AND SER-14</scope>
    <scope>IDENTIFICATION BY MASS SPECTROMETRY [LARGE SCALE ANALYSIS]</scope>
    <source>
        <tissue>Brain</tissue>
        <tissue>Kidney</tissue>
        <tissue>Lung</tissue>
        <tissue>Pancreas</tissue>
        <tissue>Spleen</tissue>
        <tissue>Testis</tissue>
    </source>
</reference>
<reference key="6">
    <citation type="journal article" date="2011" name="Arthritis Rheum.">
        <title>Overexpression of SPACIA1/SAAL1, a newly identified gene that is involved in synoviocyte proliferation, accelerates the progression of synovitis in mice and humans.</title>
        <authorList>
            <person name="Sato T."/>
            <person name="Fujii R."/>
            <person name="Konomi K."/>
            <person name="Yagishita N."/>
            <person name="Aratani S."/>
            <person name="Araya N."/>
            <person name="Aono H."/>
            <person name="Yudoh K."/>
            <person name="Suzuki N."/>
            <person name="Beppu M."/>
            <person name="Yamano Y."/>
            <person name="Nishioka K."/>
            <person name="Nakajima T."/>
        </authorList>
    </citation>
    <scope>TISSUE SPECIFICITY</scope>
</reference>
<proteinExistence type="evidence at protein level"/>
<feature type="chain" id="PRO_0000279541" description="Protein SAAL1">
    <location>
        <begin position="1"/>
        <end position="474"/>
    </location>
</feature>
<feature type="region of interest" description="Disordered" evidence="2">
    <location>
        <begin position="1"/>
        <end position="24"/>
    </location>
</feature>
<feature type="compositionally biased region" description="Pro residues" evidence="2">
    <location>
        <begin position="1"/>
        <end position="11"/>
    </location>
</feature>
<feature type="modified residue" description="Phosphoserine" evidence="8 10">
    <location>
        <position position="6"/>
    </location>
</feature>
<feature type="modified residue" description="Phosphoserine" evidence="8 10">
    <location>
        <position position="14"/>
    </location>
</feature>
<feature type="modified residue" description="Phosphothreonine" evidence="9">
    <location>
        <position position="387"/>
    </location>
</feature>
<feature type="splice variant" id="VSP_023483" description="In isoform 2." evidence="4 5">
    <original>EKVAQGLKEGQLSKQKCSCAFQSLLPLYGPAVEDFVKVVREVDEALADDLEDSFPSVKAQT</original>
    <variation>VGGSISDFFSKIKGADYLMS</variation>
    <location>
        <begin position="414"/>
        <end position="474"/>
    </location>
</feature>
<evidence type="ECO:0000250" key="1">
    <source>
        <dbReference type="UniProtKB" id="Q96ER3"/>
    </source>
</evidence>
<evidence type="ECO:0000256" key="2">
    <source>
        <dbReference type="SAM" id="MobiDB-lite"/>
    </source>
</evidence>
<evidence type="ECO:0000269" key="3">
    <source>
    </source>
</evidence>
<evidence type="ECO:0000303" key="4">
    <source>
    </source>
</evidence>
<evidence type="ECO:0000303" key="5">
    <source>
    </source>
</evidence>
<evidence type="ECO:0000303" key="6">
    <source>
    </source>
</evidence>
<evidence type="ECO:0000305" key="7"/>
<evidence type="ECO:0007744" key="8">
    <source>
    </source>
</evidence>
<evidence type="ECO:0007744" key="9">
    <source>
    </source>
</evidence>
<evidence type="ECO:0007744" key="10">
    <source>
    </source>
</evidence>
<keyword id="KW-0025">Alternative splicing</keyword>
<keyword id="KW-0539">Nucleus</keyword>
<keyword id="KW-0597">Phosphoprotein</keyword>
<keyword id="KW-1185">Reference proteome</keyword>
<organism>
    <name type="scientific">Mus musculus</name>
    <name type="common">Mouse</name>
    <dbReference type="NCBI Taxonomy" id="10090"/>
    <lineage>
        <taxon>Eukaryota</taxon>
        <taxon>Metazoa</taxon>
        <taxon>Chordata</taxon>
        <taxon>Craniata</taxon>
        <taxon>Vertebrata</taxon>
        <taxon>Euteleostomi</taxon>
        <taxon>Mammalia</taxon>
        <taxon>Eutheria</taxon>
        <taxon>Euarchontoglires</taxon>
        <taxon>Glires</taxon>
        <taxon>Rodentia</taxon>
        <taxon>Myomorpha</taxon>
        <taxon>Muroidea</taxon>
        <taxon>Muridae</taxon>
        <taxon>Murinae</taxon>
        <taxon>Mus</taxon>
        <taxon>Mus</taxon>
    </lineage>
</organism>
<protein>
    <recommendedName>
        <fullName>Protein SAAL1</fullName>
    </recommendedName>
    <alternativeName>
        <fullName evidence="6">Synoviocyte proliferation-associated in collagen-induced arthritis protein 1</fullName>
        <shortName>SPACIA1</shortName>
    </alternativeName>
</protein>
<accession>Q9D2C2</accession>
<accession>Q3UYS6</accession>
<accession>Q8R2L2</accession>
<name>SAAL1_MOUSE</name>
<sequence>MDRNPSPPPPTCGSEDEEDLGGGDRIGSTVYSKHWLFGVLSGLIQIVTPESGTSGSADEEEQADLAEEMENEICRVWDMSMDEDVALFLQEFKAPDIFMGVLAKSPCPRLREICVGILGNMACFREICESISKNEDHGQVLLQCLCDSDPPTLLETCRLLLTCLSQTEVASVWVRRIREHPSVYANVCFIMSSSTNVDLLVKVGEVVDKLFDLDEKLMLEWIRKGATRLPGQPHEDSEEQPVFSIVPCVLEAAKQVRSENLEGLDVYMRILQLLTTVDDGVQAIVQCPDTGNDTWRLLFDLVCHEFCQPDDPPVILQEQKTVLASVFSVLSAISASRAEQEHLKIEEGDLPLIDSLIRVLQNMEHCQKKPENPSESDTEEPTICGPTQDDFHMKILKDISCEFLSNIFQVLTKEKVAQGLKEGQLSKQKCSCAFQSLLPLYGPAVEDFVKVVREVDEALADDLEDSFPSVKAQT</sequence>
<gene>
    <name type="primary">Saal1</name>
</gene>